<organism>
    <name type="scientific">Ricinus communis</name>
    <name type="common">Castor bean</name>
    <dbReference type="NCBI Taxonomy" id="3988"/>
    <lineage>
        <taxon>Eukaryota</taxon>
        <taxon>Viridiplantae</taxon>
        <taxon>Streptophyta</taxon>
        <taxon>Embryophyta</taxon>
        <taxon>Tracheophyta</taxon>
        <taxon>Spermatophyta</taxon>
        <taxon>Magnoliopsida</taxon>
        <taxon>eudicotyledons</taxon>
        <taxon>Gunneridae</taxon>
        <taxon>Pentapetalae</taxon>
        <taxon>rosids</taxon>
        <taxon>fabids</taxon>
        <taxon>Malpighiales</taxon>
        <taxon>Euphorbiaceae</taxon>
        <taxon>Acalyphoideae</taxon>
        <taxon>Acalypheae</taxon>
        <taxon>Ricinus</taxon>
    </lineage>
</organism>
<feature type="chain" id="PRO_0000434633" description="Oleoyl-12-hydroxylase FAH12">
    <location>
        <begin position="1"/>
        <end position="387"/>
    </location>
</feature>
<feature type="transmembrane region" description="Helical" evidence="1">
    <location>
        <begin position="61"/>
        <end position="81"/>
    </location>
</feature>
<feature type="transmembrane region" description="Helical" evidence="1">
    <location>
        <begin position="88"/>
        <end position="108"/>
    </location>
</feature>
<feature type="transmembrane region" description="Helical" evidence="1">
    <location>
        <begin position="121"/>
        <end position="141"/>
    </location>
</feature>
<feature type="transmembrane region" description="Helical" evidence="1">
    <location>
        <begin position="183"/>
        <end position="203"/>
    </location>
</feature>
<feature type="transmembrane region" description="Helical" evidence="1">
    <location>
        <begin position="229"/>
        <end position="249"/>
    </location>
</feature>
<feature type="transmembrane region" description="Helical" evidence="1">
    <location>
        <begin position="253"/>
        <end position="273"/>
    </location>
</feature>
<feature type="region of interest" description="Disordered" evidence="2">
    <location>
        <begin position="1"/>
        <end position="34"/>
    </location>
</feature>
<feature type="short sequence motif" description="Histidine box-1" evidence="12">
    <location>
        <begin position="109"/>
        <end position="113"/>
    </location>
</feature>
<feature type="short sequence motif" description="Histidine box-2" evidence="12">
    <location>
        <begin position="145"/>
        <end position="149"/>
    </location>
</feature>
<feature type="short sequence motif" description="Histidine box-3" evidence="12">
    <location>
        <begin position="319"/>
        <end position="323"/>
    </location>
</feature>
<feature type="sequence variant" description="In OLE-1; enhanced accumulation of oleic acid but low ricinoleic acid levels in seeds, high-oleic castor mutant 1; when associated with A-242 and Q-319." evidence="5">
    <original>F</original>
    <variation>S</variation>
    <location>
        <position position="49"/>
    </location>
</feature>
<feature type="sequence variant" description="In OLE-1; enhanced accumulation of oleic acid but low ricinoleic acid levels in seeds, high-oleic castor mutant 1; when associated with S-49 and Q-319." evidence="5">
    <original>V</original>
    <variation>A</variation>
    <location>
        <position position="242"/>
    </location>
</feature>
<feature type="sequence variant" description="In OLE-1; enhanced accumulation of oleic acid but low ricinoleic acid levels in seeds, high-oleic castor mutant 1; when associated with S-49 and A-242." evidence="5">
    <original>H</original>
    <variation>Q</variation>
    <location>
        <position position="319"/>
    </location>
</feature>
<feature type="mutagenesis site" description="Strongly reduced ricinoleic acid accumulation; when associated with A-242." evidence="5">
    <original>F</original>
    <variation>S</variation>
    <location>
        <position position="49"/>
    </location>
</feature>
<feature type="mutagenesis site" description="Lower ricinoleic acid accumulation. Strongly reduced ricinoleic acid accumulation; when associated with S-49 or Q-319." evidence="5">
    <original>V</original>
    <variation>A</variation>
    <location>
        <position position="242"/>
    </location>
</feature>
<feature type="mutagenesis site" description="Strongly reduced ricinoleic acid accumulation; when associated with A-242." evidence="5">
    <original>H</original>
    <variation>Q</variation>
    <location>
        <position position="319"/>
    </location>
</feature>
<feature type="sequence conflict" description="In Ref. 1; AAC49010." evidence="12" ref="1">
    <original>L</original>
    <variation>S</variation>
    <location>
        <position position="176"/>
    </location>
</feature>
<proteinExistence type="evidence at protein level"/>
<keyword id="KW-0256">Endoplasmic reticulum</keyword>
<keyword id="KW-0275">Fatty acid biosynthesis</keyword>
<keyword id="KW-0276">Fatty acid metabolism</keyword>
<keyword id="KW-0444">Lipid biosynthesis</keyword>
<keyword id="KW-0443">Lipid metabolism</keyword>
<keyword id="KW-0472">Membrane</keyword>
<keyword id="KW-0492">Microsome</keyword>
<keyword id="KW-0503">Monooxygenase</keyword>
<keyword id="KW-0560">Oxidoreductase</keyword>
<keyword id="KW-1185">Reference proteome</keyword>
<keyword id="KW-0812">Transmembrane</keyword>
<keyword id="KW-1133">Transmembrane helix</keyword>
<dbReference type="EC" id="1.14.18.4" evidence="3 7"/>
<dbReference type="EMBL" id="U22378">
    <property type="protein sequence ID" value="AAC49010.1"/>
    <property type="molecule type" value="mRNA"/>
</dbReference>
<dbReference type="EMBL" id="EU523112">
    <property type="protein sequence ID" value="ACD39348.1"/>
    <property type="molecule type" value="mRNA"/>
</dbReference>
<dbReference type="EMBL" id="EQ974077">
    <property type="protein sequence ID" value="EEF34257.1"/>
    <property type="molecule type" value="Genomic_DNA"/>
</dbReference>
<dbReference type="PIR" id="T09839">
    <property type="entry name" value="T09839"/>
</dbReference>
<dbReference type="RefSeq" id="NP_001310650.1">
    <property type="nucleotide sequence ID" value="NM_001323721.1"/>
</dbReference>
<dbReference type="RefSeq" id="XP_002528127.1">
    <property type="nucleotide sequence ID" value="XM_002528081.2"/>
</dbReference>
<dbReference type="SMR" id="Q41131"/>
<dbReference type="STRING" id="3988.Q41131"/>
<dbReference type="GeneID" id="8267537"/>
<dbReference type="KEGG" id="ag:AAC49010"/>
<dbReference type="KEGG" id="rcu:8267537"/>
<dbReference type="eggNOG" id="ENOG502QQNB">
    <property type="taxonomic scope" value="Eukaryota"/>
</dbReference>
<dbReference type="InParanoid" id="Q41131"/>
<dbReference type="OrthoDB" id="1461976at2759"/>
<dbReference type="BRENDA" id="1.14.18.4">
    <property type="organism ID" value="1204"/>
</dbReference>
<dbReference type="UniPathway" id="UPA01038"/>
<dbReference type="Proteomes" id="UP000008311">
    <property type="component" value="Unassembled WGS sequence"/>
</dbReference>
<dbReference type="GO" id="GO:0005789">
    <property type="term" value="C:endoplasmic reticulum membrane"/>
    <property type="evidence" value="ECO:0000314"/>
    <property type="project" value="UniProtKB"/>
</dbReference>
<dbReference type="GO" id="GO:0004497">
    <property type="term" value="F:monooxygenase activity"/>
    <property type="evidence" value="ECO:0000314"/>
    <property type="project" value="UniProtKB"/>
</dbReference>
<dbReference type="GO" id="GO:0016491">
    <property type="term" value="F:oxidoreductase activity"/>
    <property type="evidence" value="ECO:0000318"/>
    <property type="project" value="GO_Central"/>
</dbReference>
<dbReference type="GO" id="GO:0016717">
    <property type="term" value="F:oxidoreductase activity, acting on paired donors, with oxidation of a pair of donors resulting in the reduction of molecular oxygen to two molecules of water"/>
    <property type="evidence" value="ECO:0007669"/>
    <property type="project" value="InterPro"/>
</dbReference>
<dbReference type="GO" id="GO:0050183">
    <property type="term" value="F:phosphatidylcholine 12-monooxygenase activity"/>
    <property type="evidence" value="ECO:0000315"/>
    <property type="project" value="UniProtKB"/>
</dbReference>
<dbReference type="GO" id="GO:0006633">
    <property type="term" value="P:fatty acid biosynthetic process"/>
    <property type="evidence" value="ECO:0007669"/>
    <property type="project" value="UniProtKB-KW"/>
</dbReference>
<dbReference type="CDD" id="cd03507">
    <property type="entry name" value="Delta12-FADS-like"/>
    <property type="match status" value="1"/>
</dbReference>
<dbReference type="InterPro" id="IPR005804">
    <property type="entry name" value="FA_desaturase_dom"/>
</dbReference>
<dbReference type="InterPro" id="IPR021863">
    <property type="entry name" value="FAS_N"/>
</dbReference>
<dbReference type="InterPro" id="IPR012171">
    <property type="entry name" value="Fatty_acid_desaturase"/>
</dbReference>
<dbReference type="PANTHER" id="PTHR32100">
    <property type="entry name" value="OMEGA-6 FATTY ACID DESATURASE, CHLOROPLASTIC"/>
    <property type="match status" value="1"/>
</dbReference>
<dbReference type="Pfam" id="PF11960">
    <property type="entry name" value="DUF3474"/>
    <property type="match status" value="1"/>
</dbReference>
<dbReference type="Pfam" id="PF00487">
    <property type="entry name" value="FA_desaturase"/>
    <property type="match status" value="1"/>
</dbReference>
<comment type="function">
    <text evidence="3 5 6 7 8">Oleoyl-12-hydroxylase involved in the biosynthesis of ricinoleate (12-hydroxy-cis-9-octadecenoate), the major fatty acid constituent of the oil seeds from castor bean plants. Catalyzes the hydroxylation at the 12-position of 1-acyl-2-oleoyl-sn-glycero-3-phosphocholine (2-oleoyl-PC), which seems to be the actual physiological subtrate (PubMed:1417766, PubMed:8784737). It uses cytochrome b5 as an electron donor (PubMed:1417766). May also be involved in the production of lesquerolic acid (14-hydroxyeicos-cis-ll-enoic acid) in vitro (PubMed:9085577).</text>
</comment>
<comment type="catalytic activity">
    <reaction evidence="3 7">
        <text>a 1-acyl-2-(9Z)-octadecenoyl-sn-glycero-3-phosphocholine + 2 Fe(II)-[cytochrome b5] + O2 + 2 H(+) = a 1-acyl-2-[(R)-12-hydroxyoleoyl]-sn-glycero-3-phosphocholine + 2 Fe(III)-[cytochrome b5] + H2O</text>
        <dbReference type="Rhea" id="RHEA:46360"/>
        <dbReference type="Rhea" id="RHEA-COMP:10438"/>
        <dbReference type="Rhea" id="RHEA-COMP:10439"/>
        <dbReference type="ChEBI" id="CHEBI:15377"/>
        <dbReference type="ChEBI" id="CHEBI:15378"/>
        <dbReference type="ChEBI" id="CHEBI:15379"/>
        <dbReference type="ChEBI" id="CHEBI:29033"/>
        <dbReference type="ChEBI" id="CHEBI:29034"/>
        <dbReference type="ChEBI" id="CHEBI:58293"/>
        <dbReference type="ChEBI" id="CHEBI:86048"/>
        <dbReference type="EC" id="1.14.18.4"/>
    </reaction>
    <physiologicalReaction direction="left-to-right" evidence="13 14">
        <dbReference type="Rhea" id="RHEA:46361"/>
    </physiologicalReaction>
</comment>
<comment type="activity regulation">
    <text evidence="7">Inhibited by oleoyloxyethyl phosphocholine.</text>
</comment>
<comment type="biophysicochemical properties">
    <phDependence>
        <text evidence="7">Optimum pH is 6.3.</text>
    </phDependence>
    <temperatureDependence>
        <text evidence="7">Optimum temperature is 22.5 degrees Celsius.</text>
    </temperatureDependence>
</comment>
<comment type="pathway">
    <text evidence="5">Lipid metabolism; monounsaturated fatty acid biosynthesis.</text>
</comment>
<comment type="subcellular location">
    <subcellularLocation>
        <location evidence="3">Microsome membrane</location>
        <topology evidence="1">Multi-pass membrane protein</topology>
    </subcellularLocation>
</comment>
<comment type="tissue specificity">
    <text evidence="6">Expressed in seeds. Barely detected in leaves.</text>
</comment>
<comment type="developmental stage">
    <text evidence="5">Accumulates progressively during seeds development.</text>
</comment>
<comment type="domain">
    <text evidence="12">The histidine box domains may contain the active site and/or be involved in metal ion binding.</text>
</comment>
<comment type="biotechnology">
    <text evidence="4">Promotes the accumulation of hydroxy fatty acids when expressed in A.thaliana.</text>
</comment>
<comment type="similarity">
    <text evidence="12">Belongs to the fatty acid desaturase type 1 family.</text>
</comment>
<protein>
    <recommendedName>
        <fullName evidence="11">Oleoyl-12-hydroxylase FAH12</fullName>
        <ecNumber evidence="3 7">1.14.18.4</ecNumber>
    </recommendedName>
    <alternativeName>
        <fullName evidence="9">Oleate Delta(12)-hydroxylase</fullName>
    </alternativeName>
    <alternativeName>
        <fullName evidence="9 10">Oleate hydroxylase FAH12</fullName>
        <shortName evidence="9">RcFAH12</shortName>
    </alternativeName>
    <alternativeName>
        <fullName evidence="11">Phosphatidylcholine 12-monooxygenase</fullName>
    </alternativeName>
</protein>
<reference key="1">
    <citation type="journal article" date="1995" name="Proc. Natl. Acad. Sci. U.S.A.">
        <title>An oleate 12-hydroxylase from Ricinus communis L. is a fatty acyl desaturase homolog.</title>
        <authorList>
            <person name="van de Loo F.J."/>
            <person name="Broun P."/>
            <person name="Turner S."/>
            <person name="Somerville C."/>
        </authorList>
    </citation>
    <scope>NUCLEOTIDE SEQUENCE [MRNA]</scope>
    <scope>TISSUE SPECIFICITY</scope>
    <scope>FUNCTION</scope>
    <source>
        <strain>cv. Baker 296</strain>
        <tissue>Endosperm</tissue>
    </source>
</reference>
<reference key="2">
    <citation type="journal article" date="2016" name="Planta">
        <title>Molecular and biochemical characterization of the OLE-1 high-oleic castor seed (Ricinus communis L.) mutant.</title>
        <authorList>
            <person name="Venegas-Caleron M."/>
            <person name="Sanchez R."/>
            <person name="Salas J.J."/>
            <person name="Garces R."/>
            <person name="Martinez-Force E."/>
        </authorList>
    </citation>
    <scope>NUCLEOTIDE SEQUENCE [MRNA]</scope>
    <scope>FUNCTION</scope>
    <scope>VARIANTS OLE-1 SER-49; ALA-242 AND GLN-319</scope>
    <scope>MUTAGENESIS OF PHE-49; VAL-242 AND HIS-319</scope>
    <scope>DEVELOPMENTAL STAGE</scope>
    <scope>PATHWAY</scope>
    <source>
        <tissue>Endosperm</tissue>
    </source>
</reference>
<reference key="3">
    <citation type="journal article" date="2010" name="Nat. Biotechnol.">
        <title>Draft genome sequence of the oilseed species Ricinus communis.</title>
        <authorList>
            <person name="Chan A.P."/>
            <person name="Crabtree J."/>
            <person name="Zhao Q."/>
            <person name="Lorenzi H."/>
            <person name="Orvis J."/>
            <person name="Puiu D."/>
            <person name="Melake-Berhan A."/>
            <person name="Jones K.M."/>
            <person name="Redman J."/>
            <person name="Chen G."/>
            <person name="Cahoon E.B."/>
            <person name="Gedil M."/>
            <person name="Stanke M."/>
            <person name="Haas B.J."/>
            <person name="Wortman J.R."/>
            <person name="Fraser-Liggett C.M."/>
            <person name="Ravel J."/>
            <person name="Rabinowicz P.D."/>
        </authorList>
    </citation>
    <scope>NUCLEOTIDE SEQUENCE [LARGE SCALE GENOMIC DNA]</scope>
    <source>
        <strain>cv. Hale</strain>
    </source>
</reference>
<reference key="4">
    <citation type="journal article" date="1992" name="Biochem. J.">
        <title>Evidence for cytochrome b5 as an electron donor in ricinoleic acid biosynthesis in microsomal preparations from developing castor bean (Ricinus communis L.).</title>
        <authorList>
            <person name="Smith M.A."/>
            <person name="Jonsson L."/>
            <person name="Stymne S."/>
            <person name="Stobart K."/>
        </authorList>
    </citation>
    <scope>FUNCTION</scope>
    <scope>CATALYTIC ACTIVITY</scope>
    <scope>SUBCELLULAR LOCATION</scope>
    <source>
        <strain>cv. Rogusus</strain>
    </source>
</reference>
<reference key="5">
    <citation type="journal article" date="1996" name="Lipids">
        <title>Characterization of oleoyl-12-hydroxylase in castor microsomes using the putative substrate, 1-acyl-2-oleoyl-sn-glycero-3-phosphocholine.</title>
        <authorList>
            <person name="Lin J.T."/>
            <person name="McKeon T.A."/>
            <person name="Goodrich-Tanrikulu M."/>
            <person name="Stafford A.E."/>
        </authorList>
    </citation>
    <scope>FUNCTION</scope>
    <scope>CATALYTIC ACTIVITY</scope>
    <scope>BIOPHYSICOCHEMICAL PROPERTIES</scope>
    <scope>ACTIVITY REGULATION</scope>
</reference>
<reference key="6">
    <citation type="journal article" date="1997" name="Plant Physiol.">
        <title>Accumulation of ricinoleic, lesquerolic, and densipolic acids in seeds of transgenic Arabidopsis plants that express a fatty acyl hydroxylase cDNA from castor bean.</title>
        <authorList>
            <person name="Broun P."/>
            <person name="Somerville C."/>
        </authorList>
    </citation>
    <scope>FUNCTION</scope>
</reference>
<reference key="7">
    <citation type="journal article" date="2012" name="Plant Physiol.">
        <title>The phosphatidylcholine diacylglycerol cholinephosphotransferase is required for efficient hydroxy fatty acid accumulation in transgenic Arabidopsis.</title>
        <authorList>
            <person name="Hu Z."/>
            <person name="Ren Z."/>
            <person name="Lu C."/>
        </authorList>
    </citation>
    <scope>BIOTECHNOLOGY</scope>
</reference>
<name>FAH12_RICCO</name>
<gene>
    <name evidence="10" type="primary">FAH12</name>
    <name evidence="15" type="ORF">RCOM_0146820</name>
</gene>
<sequence>MGGGGRMSTVITSNNSEKKGGSSHLKRAPHTKPPFTLGDLKRAIPPHCFERSFVRSFSYVAYDVCLSFLFYSIATNFFPYISSPLSYVAWLVYWLFQGCILTGLWVIGHECGHHAFSEYQLADDIVGLIVHSALLVPYFSWKYSHRRHHSNIGSLERDEVFVPKSKSKISWYSKYLNNPPGRVLTLAATLLLGWPLYLAFNVSGRPYDRFACHYDPYGPIFSERERLQIYIADLGIFATTFVLYQATMAKGLAWVMRIYGVPLLIVNCFLVMITYLQHTHPAIPRYGSSEWDWLRGAMVTVDRDYGVLNKVFHNIADTHVAHHLFATVPHYHAMEATKAIKPIMGEYYRYDGTPFYKALWREAKECLFVEPDEGAPTQGVFWYRNKY</sequence>
<evidence type="ECO:0000255" key="1"/>
<evidence type="ECO:0000256" key="2">
    <source>
        <dbReference type="SAM" id="MobiDB-lite"/>
    </source>
</evidence>
<evidence type="ECO:0000269" key="3">
    <source>
    </source>
</evidence>
<evidence type="ECO:0000269" key="4">
    <source>
    </source>
</evidence>
<evidence type="ECO:0000269" key="5">
    <source>
    </source>
</evidence>
<evidence type="ECO:0000269" key="6">
    <source>
    </source>
</evidence>
<evidence type="ECO:0000269" key="7">
    <source>
    </source>
</evidence>
<evidence type="ECO:0000269" key="8">
    <source>
    </source>
</evidence>
<evidence type="ECO:0000303" key="9">
    <source>
    </source>
</evidence>
<evidence type="ECO:0000303" key="10">
    <source>
    </source>
</evidence>
<evidence type="ECO:0000303" key="11">
    <source>
    </source>
</evidence>
<evidence type="ECO:0000305" key="12"/>
<evidence type="ECO:0000305" key="13">
    <source>
    </source>
</evidence>
<evidence type="ECO:0000305" key="14">
    <source>
    </source>
</evidence>
<evidence type="ECO:0000312" key="15">
    <source>
        <dbReference type="EMBL" id="EEF34257.1"/>
    </source>
</evidence>
<accession>Q41131</accession>
<accession>B9SQ58</accession>
<accession>D2CPE1</accession>